<evidence type="ECO:0000255" key="1">
    <source>
        <dbReference type="HAMAP-Rule" id="MF_01220"/>
    </source>
</evidence>
<evidence type="ECO:0000256" key="2">
    <source>
        <dbReference type="SAM" id="MobiDB-lite"/>
    </source>
</evidence>
<proteinExistence type="inferred from homology"/>
<sequence length="261" mass="27430">MTEPDVAGAPASKPEPASTGAASAAQLSGYSRVLLKLGGEMFGGGQVGLDPDVVAQVARQIADVVRGGVQIAVVIGGGNFFRGAQLQQLGMERTRSDYMGMLGTVMNSLALQDFLEKEGIVTRVQTAITMGQVAEPYLPLRAVRHLEKGRVVIFGAGMGLPYFSTDTTAAQRALEIGADVVLMAKAVDGVFAEDPRVNPEAELLTAVSHREVLDRGLRVADATAFSLCMDNGMPILVFNLLTDGNIARAVRGEKIGTLVTT</sequence>
<protein>
    <recommendedName>
        <fullName evidence="1">Uridylate kinase</fullName>
        <shortName evidence="1">UK</shortName>
        <ecNumber evidence="1">2.7.4.22</ecNumber>
    </recommendedName>
    <alternativeName>
        <fullName evidence="1">Uridine monophosphate kinase</fullName>
        <shortName evidence="1">UMP kinase</shortName>
        <shortName evidence="1">UMPK</shortName>
    </alternativeName>
</protein>
<accession>A1KMM7</accession>
<name>PYRH_MYCBP</name>
<dbReference type="EC" id="2.7.4.22" evidence="1"/>
<dbReference type="EMBL" id="AM408590">
    <property type="protein sequence ID" value="CAL72893.1"/>
    <property type="molecule type" value="Genomic_DNA"/>
</dbReference>
<dbReference type="RefSeq" id="WP_003414665.1">
    <property type="nucleotide sequence ID" value="NC_008769.1"/>
</dbReference>
<dbReference type="SMR" id="A1KMM7"/>
<dbReference type="GeneID" id="45426871"/>
<dbReference type="KEGG" id="mbb:BCG_2904c"/>
<dbReference type="HOGENOM" id="CLU_033861_0_0_11"/>
<dbReference type="UniPathway" id="UPA00159">
    <property type="reaction ID" value="UER00275"/>
</dbReference>
<dbReference type="Proteomes" id="UP000001472">
    <property type="component" value="Chromosome"/>
</dbReference>
<dbReference type="GO" id="GO:0005737">
    <property type="term" value="C:cytoplasm"/>
    <property type="evidence" value="ECO:0007669"/>
    <property type="project" value="UniProtKB-SubCell"/>
</dbReference>
<dbReference type="GO" id="GO:0005524">
    <property type="term" value="F:ATP binding"/>
    <property type="evidence" value="ECO:0007669"/>
    <property type="project" value="UniProtKB-KW"/>
</dbReference>
<dbReference type="GO" id="GO:0033862">
    <property type="term" value="F:UMP kinase activity"/>
    <property type="evidence" value="ECO:0007669"/>
    <property type="project" value="UniProtKB-EC"/>
</dbReference>
<dbReference type="GO" id="GO:0044210">
    <property type="term" value="P:'de novo' CTP biosynthetic process"/>
    <property type="evidence" value="ECO:0007669"/>
    <property type="project" value="UniProtKB-UniRule"/>
</dbReference>
<dbReference type="GO" id="GO:0006225">
    <property type="term" value="P:UDP biosynthetic process"/>
    <property type="evidence" value="ECO:0007669"/>
    <property type="project" value="TreeGrafter"/>
</dbReference>
<dbReference type="CDD" id="cd04254">
    <property type="entry name" value="AAK_UMPK-PyrH-Ec"/>
    <property type="match status" value="1"/>
</dbReference>
<dbReference type="FunFam" id="3.40.1160.10:FF:000001">
    <property type="entry name" value="Uridylate kinase"/>
    <property type="match status" value="1"/>
</dbReference>
<dbReference type="Gene3D" id="3.40.1160.10">
    <property type="entry name" value="Acetylglutamate kinase-like"/>
    <property type="match status" value="1"/>
</dbReference>
<dbReference type="HAMAP" id="MF_01220_B">
    <property type="entry name" value="PyrH_B"/>
    <property type="match status" value="1"/>
</dbReference>
<dbReference type="InterPro" id="IPR036393">
    <property type="entry name" value="AceGlu_kinase-like_sf"/>
</dbReference>
<dbReference type="InterPro" id="IPR001048">
    <property type="entry name" value="Asp/Glu/Uridylate_kinase"/>
</dbReference>
<dbReference type="InterPro" id="IPR011817">
    <property type="entry name" value="Uridylate_kinase"/>
</dbReference>
<dbReference type="InterPro" id="IPR015963">
    <property type="entry name" value="Uridylate_kinase_bac"/>
</dbReference>
<dbReference type="NCBIfam" id="TIGR02075">
    <property type="entry name" value="pyrH_bact"/>
    <property type="match status" value="1"/>
</dbReference>
<dbReference type="PANTHER" id="PTHR42833">
    <property type="entry name" value="URIDYLATE KINASE"/>
    <property type="match status" value="1"/>
</dbReference>
<dbReference type="PANTHER" id="PTHR42833:SF4">
    <property type="entry name" value="URIDYLATE KINASE PUMPKIN, CHLOROPLASTIC"/>
    <property type="match status" value="1"/>
</dbReference>
<dbReference type="Pfam" id="PF00696">
    <property type="entry name" value="AA_kinase"/>
    <property type="match status" value="1"/>
</dbReference>
<dbReference type="PIRSF" id="PIRSF005650">
    <property type="entry name" value="Uridylate_kin"/>
    <property type="match status" value="1"/>
</dbReference>
<dbReference type="SUPFAM" id="SSF53633">
    <property type="entry name" value="Carbamate kinase-like"/>
    <property type="match status" value="1"/>
</dbReference>
<organism>
    <name type="scientific">Mycobacterium bovis (strain BCG / Pasteur 1173P2)</name>
    <dbReference type="NCBI Taxonomy" id="410289"/>
    <lineage>
        <taxon>Bacteria</taxon>
        <taxon>Bacillati</taxon>
        <taxon>Actinomycetota</taxon>
        <taxon>Actinomycetes</taxon>
        <taxon>Mycobacteriales</taxon>
        <taxon>Mycobacteriaceae</taxon>
        <taxon>Mycobacterium</taxon>
        <taxon>Mycobacterium tuberculosis complex</taxon>
    </lineage>
</organism>
<comment type="function">
    <text evidence="1">Catalyzes the reversible phosphorylation of UMP to UDP.</text>
</comment>
<comment type="catalytic activity">
    <reaction evidence="1">
        <text>UMP + ATP = UDP + ADP</text>
        <dbReference type="Rhea" id="RHEA:24400"/>
        <dbReference type="ChEBI" id="CHEBI:30616"/>
        <dbReference type="ChEBI" id="CHEBI:57865"/>
        <dbReference type="ChEBI" id="CHEBI:58223"/>
        <dbReference type="ChEBI" id="CHEBI:456216"/>
        <dbReference type="EC" id="2.7.4.22"/>
    </reaction>
</comment>
<comment type="activity regulation">
    <text evidence="1">Inhibited by UTP.</text>
</comment>
<comment type="pathway">
    <text evidence="1">Pyrimidine metabolism; CTP biosynthesis via de novo pathway; UDP from UMP (UMPK route): step 1/1.</text>
</comment>
<comment type="subunit">
    <text evidence="1">Homohexamer.</text>
</comment>
<comment type="subcellular location">
    <subcellularLocation>
        <location evidence="1">Cytoplasm</location>
    </subcellularLocation>
</comment>
<comment type="similarity">
    <text evidence="1">Belongs to the UMP kinase family.</text>
</comment>
<feature type="chain" id="PRO_1000053962" description="Uridylate kinase">
    <location>
        <begin position="1"/>
        <end position="261"/>
    </location>
</feature>
<feature type="region of interest" description="Disordered" evidence="2">
    <location>
        <begin position="1"/>
        <end position="23"/>
    </location>
</feature>
<feature type="binding site" evidence="1">
    <location>
        <begin position="36"/>
        <end position="39"/>
    </location>
    <ligand>
        <name>ATP</name>
        <dbReference type="ChEBI" id="CHEBI:30616"/>
    </ligand>
</feature>
<feature type="binding site" evidence="1">
    <location>
        <position position="77"/>
    </location>
    <ligand>
        <name>UMP</name>
        <dbReference type="ChEBI" id="CHEBI:57865"/>
    </ligand>
</feature>
<feature type="binding site" evidence="1">
    <location>
        <position position="78"/>
    </location>
    <ligand>
        <name>ATP</name>
        <dbReference type="ChEBI" id="CHEBI:30616"/>
    </ligand>
</feature>
<feature type="binding site" evidence="1">
    <location>
        <position position="82"/>
    </location>
    <ligand>
        <name>ATP</name>
        <dbReference type="ChEBI" id="CHEBI:30616"/>
    </ligand>
</feature>
<feature type="binding site" evidence="1">
    <location>
        <position position="97"/>
    </location>
    <ligand>
        <name>UMP</name>
        <dbReference type="ChEBI" id="CHEBI:57865"/>
    </ligand>
</feature>
<feature type="binding site" evidence="1">
    <location>
        <begin position="158"/>
        <end position="165"/>
    </location>
    <ligand>
        <name>UMP</name>
        <dbReference type="ChEBI" id="CHEBI:57865"/>
    </ligand>
</feature>
<feature type="binding site" evidence="1">
    <location>
        <position position="191"/>
    </location>
    <ligand>
        <name>ATP</name>
        <dbReference type="ChEBI" id="CHEBI:30616"/>
    </ligand>
</feature>
<feature type="binding site" evidence="1">
    <location>
        <position position="194"/>
    </location>
    <ligand>
        <name>ATP</name>
        <dbReference type="ChEBI" id="CHEBI:30616"/>
    </ligand>
</feature>
<keyword id="KW-0067">ATP-binding</keyword>
<keyword id="KW-0963">Cytoplasm</keyword>
<keyword id="KW-0418">Kinase</keyword>
<keyword id="KW-0547">Nucleotide-binding</keyword>
<keyword id="KW-0665">Pyrimidine biosynthesis</keyword>
<keyword id="KW-0808">Transferase</keyword>
<gene>
    <name evidence="1" type="primary">pyrH</name>
    <name type="ordered locus">BCG_2904c</name>
</gene>
<reference key="1">
    <citation type="journal article" date="2007" name="Proc. Natl. Acad. Sci. U.S.A.">
        <title>Genome plasticity of BCG and impact on vaccine efficacy.</title>
        <authorList>
            <person name="Brosch R."/>
            <person name="Gordon S.V."/>
            <person name="Garnier T."/>
            <person name="Eiglmeier K."/>
            <person name="Frigui W."/>
            <person name="Valenti P."/>
            <person name="Dos Santos S."/>
            <person name="Duthoy S."/>
            <person name="Lacroix C."/>
            <person name="Garcia-Pelayo C."/>
            <person name="Inwald J.K."/>
            <person name="Golby P."/>
            <person name="Garcia J.N."/>
            <person name="Hewinson R.G."/>
            <person name="Behr M.A."/>
            <person name="Quail M.A."/>
            <person name="Churcher C."/>
            <person name="Barrell B.G."/>
            <person name="Parkhill J."/>
            <person name="Cole S.T."/>
        </authorList>
    </citation>
    <scope>NUCLEOTIDE SEQUENCE [LARGE SCALE GENOMIC DNA]</scope>
    <source>
        <strain>BCG / Pasteur 1173P2</strain>
    </source>
</reference>